<dbReference type="EMBL" id="U60530">
    <property type="protein sequence ID" value="AAB03612.1"/>
    <property type="molecule type" value="mRNA"/>
</dbReference>
<dbReference type="EMBL" id="AF005743">
    <property type="protein sequence ID" value="AAB62269.1"/>
    <property type="molecule type" value="mRNA"/>
</dbReference>
<dbReference type="EMBL" id="AK007817">
    <property type="protein sequence ID" value="BAB25282.1"/>
    <property type="molecule type" value="mRNA"/>
</dbReference>
<dbReference type="EMBL" id="AY334552">
    <property type="protein sequence ID" value="AAR00933.1"/>
    <property type="molecule type" value="mRNA"/>
</dbReference>
<dbReference type="EMBL" id="BC021342">
    <property type="protein sequence ID" value="AAH21342.1"/>
    <property type="molecule type" value="mRNA"/>
</dbReference>
<dbReference type="EMBL" id="BC089184">
    <property type="protein sequence ID" value="AAH89184.1"/>
    <property type="molecule type" value="mRNA"/>
</dbReference>
<dbReference type="CCDS" id="CCDS29350.1">
    <molecule id="Q62432-1"/>
</dbReference>
<dbReference type="CCDS" id="CCDS79664.1">
    <molecule id="Q62432-2"/>
</dbReference>
<dbReference type="RefSeq" id="NP_001239410.1">
    <molecule id="Q62432-1"/>
    <property type="nucleotide sequence ID" value="NM_001252481.1"/>
</dbReference>
<dbReference type="RefSeq" id="NP_001297999.1">
    <molecule id="Q62432-2"/>
    <property type="nucleotide sequence ID" value="NM_001311070.1"/>
</dbReference>
<dbReference type="RefSeq" id="NP_034884.2">
    <molecule id="Q62432-1"/>
    <property type="nucleotide sequence ID" value="NM_010754.5"/>
</dbReference>
<dbReference type="RefSeq" id="XP_006525762.1">
    <molecule id="Q62432-1"/>
    <property type="nucleotide sequence ID" value="XM_006525699.4"/>
</dbReference>
<dbReference type="RefSeq" id="XP_017173331.1">
    <molecule id="Q62432-2"/>
    <property type="nucleotide sequence ID" value="XM_017317842.3"/>
</dbReference>
<dbReference type="RefSeq" id="XP_030106211.1">
    <molecule id="Q62432-2"/>
    <property type="nucleotide sequence ID" value="XM_030250351.1"/>
</dbReference>
<dbReference type="SMR" id="Q62432"/>
<dbReference type="BioGRID" id="201275">
    <property type="interactions" value="34"/>
</dbReference>
<dbReference type="ComplexPortal" id="CPX-10">
    <property type="entry name" value="SMAD2-SMAD3-SMAD4 complex"/>
</dbReference>
<dbReference type="ComplexPortal" id="CPX-13">
    <property type="entry name" value="SMAD2 homotrimer"/>
</dbReference>
<dbReference type="ComplexPortal" id="CPX-3251">
    <property type="entry name" value="SMAD2-SMAD4 complex"/>
</dbReference>
<dbReference type="CORUM" id="Q62432"/>
<dbReference type="FunCoup" id="Q62432">
    <property type="interactions" value="4812"/>
</dbReference>
<dbReference type="IntAct" id="Q62432">
    <property type="interactions" value="6"/>
</dbReference>
<dbReference type="MINT" id="Q62432"/>
<dbReference type="STRING" id="10090.ENSMUSP00000130115"/>
<dbReference type="ChEMBL" id="CHEMBL4523335"/>
<dbReference type="GlyGen" id="Q62432">
    <property type="glycosylation" value="2 sites, 1 N-linked glycan (1 site), 1 O-linked glycan (1 site)"/>
</dbReference>
<dbReference type="iPTMnet" id="Q62432"/>
<dbReference type="PhosphoSitePlus" id="Q62432"/>
<dbReference type="SwissPalm" id="Q62432"/>
<dbReference type="PaxDb" id="10090-ENSMUSP00000130115"/>
<dbReference type="PeptideAtlas" id="Q62432"/>
<dbReference type="ProteomicsDB" id="258699">
    <molecule id="Q62432-1"/>
</dbReference>
<dbReference type="ProteomicsDB" id="258700">
    <molecule id="Q62432-2"/>
</dbReference>
<dbReference type="Pumba" id="Q62432"/>
<dbReference type="ABCD" id="Q62432">
    <property type="antibodies" value="1 sequenced antibody"/>
</dbReference>
<dbReference type="Antibodypedia" id="9235">
    <property type="antibodies" value="1971 antibodies from 47 providers"/>
</dbReference>
<dbReference type="DNASU" id="17126"/>
<dbReference type="Ensembl" id="ENSMUST00000025453.15">
    <molecule id="Q62432-1"/>
    <property type="protein sequence ID" value="ENSMUSP00000025453.9"/>
    <property type="gene ID" value="ENSMUSG00000024563.17"/>
</dbReference>
<dbReference type="Ensembl" id="ENSMUST00000091831.13">
    <molecule id="Q62432-2"/>
    <property type="protein sequence ID" value="ENSMUSP00000089439.7"/>
    <property type="gene ID" value="ENSMUSG00000024563.17"/>
</dbReference>
<dbReference type="Ensembl" id="ENSMUST00000168423.9">
    <molecule id="Q62432-1"/>
    <property type="protein sequence ID" value="ENSMUSP00000130115.2"/>
    <property type="gene ID" value="ENSMUSG00000024563.17"/>
</dbReference>
<dbReference type="GeneID" id="17126"/>
<dbReference type="KEGG" id="mmu:17126"/>
<dbReference type="UCSC" id="uc008fqn.2">
    <molecule id="Q62432-1"/>
    <property type="organism name" value="mouse"/>
</dbReference>
<dbReference type="UCSC" id="uc008fqo.2">
    <molecule id="Q62432-2"/>
    <property type="organism name" value="mouse"/>
</dbReference>
<dbReference type="AGR" id="MGI:108051"/>
<dbReference type="CTD" id="4087"/>
<dbReference type="MGI" id="MGI:108051">
    <property type="gene designation" value="Smad2"/>
</dbReference>
<dbReference type="VEuPathDB" id="HostDB:ENSMUSG00000024563"/>
<dbReference type="eggNOG" id="KOG3701">
    <property type="taxonomic scope" value="Eukaryota"/>
</dbReference>
<dbReference type="GeneTree" id="ENSGT00940000153499"/>
<dbReference type="HOGENOM" id="CLU_026736_0_2_1"/>
<dbReference type="InParanoid" id="Q62432"/>
<dbReference type="OMA" id="PNTRCIT"/>
<dbReference type="OrthoDB" id="5794312at2759"/>
<dbReference type="PhylomeDB" id="Q62432"/>
<dbReference type="TreeFam" id="TF314923"/>
<dbReference type="Reactome" id="R-MMU-1181150">
    <property type="pathway name" value="Signaling by NODAL"/>
</dbReference>
<dbReference type="Reactome" id="R-MMU-1502540">
    <property type="pathway name" value="Signaling by Activin"/>
</dbReference>
<dbReference type="Reactome" id="R-MMU-2173788">
    <property type="pathway name" value="Downregulation of TGF-beta receptor signaling"/>
</dbReference>
<dbReference type="Reactome" id="R-MMU-2173789">
    <property type="pathway name" value="TGF-beta receptor signaling activates SMADs"/>
</dbReference>
<dbReference type="Reactome" id="R-MMU-2173795">
    <property type="pathway name" value="Downregulation of SMAD2/3:SMAD4 transcriptional activity"/>
</dbReference>
<dbReference type="Reactome" id="R-MMU-2173796">
    <property type="pathway name" value="SMAD2/SMAD3:SMAD4 heterotrimer regulates transcription"/>
</dbReference>
<dbReference type="Reactome" id="R-MMU-5689880">
    <property type="pathway name" value="Ub-specific processing proteases"/>
</dbReference>
<dbReference type="Reactome" id="R-MMU-9617828">
    <property type="pathway name" value="FOXO-mediated transcription of cell cycle genes"/>
</dbReference>
<dbReference type="BioGRID-ORCS" id="17126">
    <property type="hits" value="3 hits in 81 CRISPR screens"/>
</dbReference>
<dbReference type="ChiTaRS" id="Smad2">
    <property type="organism name" value="mouse"/>
</dbReference>
<dbReference type="PRO" id="PR:Q62432"/>
<dbReference type="Proteomes" id="UP000000589">
    <property type="component" value="Chromosome 18"/>
</dbReference>
<dbReference type="RNAct" id="Q62432">
    <property type="molecule type" value="protein"/>
</dbReference>
<dbReference type="Bgee" id="ENSMUSG00000024563">
    <property type="expression patterns" value="Expressed in saccule of membranous labyrinth and 299 other cell types or tissues"/>
</dbReference>
<dbReference type="ExpressionAtlas" id="Q62432">
    <property type="expression patterns" value="baseline and differential"/>
</dbReference>
<dbReference type="GO" id="GO:0032444">
    <property type="term" value="C:activin responsive factor complex"/>
    <property type="evidence" value="ECO:0007669"/>
    <property type="project" value="Ensembl"/>
</dbReference>
<dbReference type="GO" id="GO:0000785">
    <property type="term" value="C:chromatin"/>
    <property type="evidence" value="ECO:0007669"/>
    <property type="project" value="Ensembl"/>
</dbReference>
<dbReference type="GO" id="GO:0005737">
    <property type="term" value="C:cytoplasm"/>
    <property type="evidence" value="ECO:0000314"/>
    <property type="project" value="UniProtKB"/>
</dbReference>
<dbReference type="GO" id="GO:0071144">
    <property type="term" value="C:heteromeric SMAD protein complex"/>
    <property type="evidence" value="ECO:0000303"/>
    <property type="project" value="ComplexPortal"/>
</dbReference>
<dbReference type="GO" id="GO:0071142">
    <property type="term" value="C:homomeric SMAD protein complex"/>
    <property type="evidence" value="ECO:0007669"/>
    <property type="project" value="Ensembl"/>
</dbReference>
<dbReference type="GO" id="GO:0005654">
    <property type="term" value="C:nucleoplasm"/>
    <property type="evidence" value="ECO:0000304"/>
    <property type="project" value="Reactome"/>
</dbReference>
<dbReference type="GO" id="GO:0005634">
    <property type="term" value="C:nucleus"/>
    <property type="evidence" value="ECO:0000314"/>
    <property type="project" value="UniProtKB"/>
</dbReference>
<dbReference type="GO" id="GO:0005667">
    <property type="term" value="C:transcription regulator complex"/>
    <property type="evidence" value="ECO:0000314"/>
    <property type="project" value="MGI"/>
</dbReference>
<dbReference type="GO" id="GO:0003682">
    <property type="term" value="F:chromatin binding"/>
    <property type="evidence" value="ECO:0000314"/>
    <property type="project" value="MGI"/>
</dbReference>
<dbReference type="GO" id="GO:0070410">
    <property type="term" value="F:co-SMAD binding"/>
    <property type="evidence" value="ECO:0007669"/>
    <property type="project" value="Ensembl"/>
</dbReference>
<dbReference type="GO" id="GO:0097718">
    <property type="term" value="F:disordered domain specific binding"/>
    <property type="evidence" value="ECO:0007669"/>
    <property type="project" value="Ensembl"/>
</dbReference>
<dbReference type="GO" id="GO:0003677">
    <property type="term" value="F:DNA binding"/>
    <property type="evidence" value="ECO:0000314"/>
    <property type="project" value="UniProtKB"/>
</dbReference>
<dbReference type="GO" id="GO:0001228">
    <property type="term" value="F:DNA-binding transcription activator activity, RNA polymerase II-specific"/>
    <property type="evidence" value="ECO:0000353"/>
    <property type="project" value="ARUK-UCL"/>
</dbReference>
<dbReference type="GO" id="GO:0140297">
    <property type="term" value="F:DNA-binding transcription factor binding"/>
    <property type="evidence" value="ECO:0000353"/>
    <property type="project" value="UniProtKB"/>
</dbReference>
<dbReference type="GO" id="GO:0003690">
    <property type="term" value="F:double-stranded DNA binding"/>
    <property type="evidence" value="ECO:0000314"/>
    <property type="project" value="MGI"/>
</dbReference>
<dbReference type="GO" id="GO:0070411">
    <property type="term" value="F:I-SMAD binding"/>
    <property type="evidence" value="ECO:0007669"/>
    <property type="project" value="Ensembl"/>
</dbReference>
<dbReference type="GO" id="GO:0042802">
    <property type="term" value="F:identical protein binding"/>
    <property type="evidence" value="ECO:0000353"/>
    <property type="project" value="MGI"/>
</dbReference>
<dbReference type="GO" id="GO:0046872">
    <property type="term" value="F:metal ion binding"/>
    <property type="evidence" value="ECO:0007669"/>
    <property type="project" value="UniProtKB-KW"/>
</dbReference>
<dbReference type="GO" id="GO:0019902">
    <property type="term" value="F:phosphatase binding"/>
    <property type="evidence" value="ECO:0007669"/>
    <property type="project" value="Ensembl"/>
</dbReference>
<dbReference type="GO" id="GO:0070412">
    <property type="term" value="F:R-SMAD binding"/>
    <property type="evidence" value="ECO:0007669"/>
    <property type="project" value="Ensembl"/>
</dbReference>
<dbReference type="GO" id="GO:0000978">
    <property type="term" value="F:RNA polymerase II cis-regulatory region sequence-specific DNA binding"/>
    <property type="evidence" value="ECO:0007669"/>
    <property type="project" value="Ensembl"/>
</dbReference>
<dbReference type="GO" id="GO:0061629">
    <property type="term" value="F:RNA polymerase II-specific DNA-binding transcription factor binding"/>
    <property type="evidence" value="ECO:0000353"/>
    <property type="project" value="UniProtKB"/>
</dbReference>
<dbReference type="GO" id="GO:0046332">
    <property type="term" value="F:SMAD binding"/>
    <property type="evidence" value="ECO:0000353"/>
    <property type="project" value="UniProtKB"/>
</dbReference>
<dbReference type="GO" id="GO:0048156">
    <property type="term" value="F:tau protein binding"/>
    <property type="evidence" value="ECO:0000314"/>
    <property type="project" value="ARUK-UCL"/>
</dbReference>
<dbReference type="GO" id="GO:0034713">
    <property type="term" value="F:type I transforming growth factor beta receptor binding"/>
    <property type="evidence" value="ECO:0007669"/>
    <property type="project" value="Ensembl"/>
</dbReference>
<dbReference type="GO" id="GO:0031625">
    <property type="term" value="F:ubiquitin protein ligase binding"/>
    <property type="evidence" value="ECO:0007669"/>
    <property type="project" value="Ensembl"/>
</dbReference>
<dbReference type="GO" id="GO:0032924">
    <property type="term" value="P:activin receptor signaling pathway"/>
    <property type="evidence" value="ECO:0000303"/>
    <property type="project" value="ComplexPortal"/>
</dbReference>
<dbReference type="GO" id="GO:0009952">
    <property type="term" value="P:anterior/posterior pattern specification"/>
    <property type="evidence" value="ECO:0000315"/>
    <property type="project" value="MGI"/>
</dbReference>
<dbReference type="GO" id="GO:0003180">
    <property type="term" value="P:aortic valve morphogenesis"/>
    <property type="evidence" value="ECO:0000316"/>
    <property type="project" value="BHF-UCL"/>
</dbReference>
<dbReference type="GO" id="GO:0045165">
    <property type="term" value="P:cell fate commitment"/>
    <property type="evidence" value="ECO:0000315"/>
    <property type="project" value="MGI"/>
</dbReference>
<dbReference type="GO" id="GO:0008283">
    <property type="term" value="P:cell population proliferation"/>
    <property type="evidence" value="ECO:0000316"/>
    <property type="project" value="MGI"/>
</dbReference>
<dbReference type="GO" id="GO:0003140">
    <property type="term" value="P:determination of left/right asymmetry in lateral mesoderm"/>
    <property type="evidence" value="ECO:0007669"/>
    <property type="project" value="Ensembl"/>
</dbReference>
<dbReference type="GO" id="GO:0048589">
    <property type="term" value="P:developmental growth"/>
    <property type="evidence" value="ECO:0000316"/>
    <property type="project" value="MGI"/>
</dbReference>
<dbReference type="GO" id="GO:0048701">
    <property type="term" value="P:embryonic cranial skeleton morphogenesis"/>
    <property type="evidence" value="ECO:0000316"/>
    <property type="project" value="MGI"/>
</dbReference>
<dbReference type="GO" id="GO:0048617">
    <property type="term" value="P:embryonic foregut morphogenesis"/>
    <property type="evidence" value="ECO:0000316"/>
    <property type="project" value="MGI"/>
</dbReference>
<dbReference type="GO" id="GO:0009880">
    <property type="term" value="P:embryonic pattern specification"/>
    <property type="evidence" value="ECO:0000316"/>
    <property type="project" value="MGI"/>
</dbReference>
<dbReference type="GO" id="GO:0003203">
    <property type="term" value="P:endocardial cushion morphogenesis"/>
    <property type="evidence" value="ECO:0000316"/>
    <property type="project" value="BHF-UCL"/>
</dbReference>
<dbReference type="GO" id="GO:0007492">
    <property type="term" value="P:endoderm development"/>
    <property type="evidence" value="ECO:0000316"/>
    <property type="project" value="MGI"/>
</dbReference>
<dbReference type="GO" id="GO:0001706">
    <property type="term" value="P:endoderm formation"/>
    <property type="evidence" value="ECO:0000315"/>
    <property type="project" value="MGI"/>
</dbReference>
<dbReference type="GO" id="GO:0007369">
    <property type="term" value="P:gastrulation"/>
    <property type="evidence" value="ECO:0000316"/>
    <property type="project" value="MGI"/>
</dbReference>
<dbReference type="GO" id="GO:0007507">
    <property type="term" value="P:heart development"/>
    <property type="evidence" value="ECO:0000316"/>
    <property type="project" value="MGI"/>
</dbReference>
<dbReference type="GO" id="GO:0001701">
    <property type="term" value="P:in utero embryonic development"/>
    <property type="evidence" value="ECO:0000315"/>
    <property type="project" value="MGI"/>
</dbReference>
<dbReference type="GO" id="GO:0030073">
    <property type="term" value="P:insulin secretion"/>
    <property type="evidence" value="ECO:0000316"/>
    <property type="project" value="MGI"/>
</dbReference>
<dbReference type="GO" id="GO:0035556">
    <property type="term" value="P:intracellular signal transduction"/>
    <property type="evidence" value="ECO:0000314"/>
    <property type="project" value="MGI"/>
</dbReference>
<dbReference type="GO" id="GO:0030324">
    <property type="term" value="P:lung development"/>
    <property type="evidence" value="ECO:0000316"/>
    <property type="project" value="MGI"/>
</dbReference>
<dbReference type="GO" id="GO:0001707">
    <property type="term" value="P:mesoderm formation"/>
    <property type="evidence" value="ECO:0000315"/>
    <property type="project" value="MGI"/>
</dbReference>
<dbReference type="GO" id="GO:0045892">
    <property type="term" value="P:negative regulation of DNA-templated transcription"/>
    <property type="evidence" value="ECO:0007669"/>
    <property type="project" value="Ensembl"/>
</dbReference>
<dbReference type="GO" id="GO:0010629">
    <property type="term" value="P:negative regulation of gene expression"/>
    <property type="evidence" value="ECO:0000315"/>
    <property type="project" value="MGI"/>
</dbReference>
<dbReference type="GO" id="GO:0030279">
    <property type="term" value="P:negative regulation of ossification"/>
    <property type="evidence" value="ECO:0007669"/>
    <property type="project" value="Ensembl"/>
</dbReference>
<dbReference type="GO" id="GO:0038092">
    <property type="term" value="P:nodal signaling pathway"/>
    <property type="evidence" value="ECO:0007669"/>
    <property type="project" value="Ensembl"/>
</dbReference>
<dbReference type="GO" id="GO:0071895">
    <property type="term" value="P:odontoblast differentiation"/>
    <property type="evidence" value="ECO:0000315"/>
    <property type="project" value="UniProtKB"/>
</dbReference>
<dbReference type="GO" id="GO:0035265">
    <property type="term" value="P:organ growth"/>
    <property type="evidence" value="ECO:0000316"/>
    <property type="project" value="MGI"/>
</dbReference>
<dbReference type="GO" id="GO:0031016">
    <property type="term" value="P:pancreas development"/>
    <property type="evidence" value="ECO:0000316"/>
    <property type="project" value="MGI"/>
</dbReference>
<dbReference type="GO" id="GO:0048340">
    <property type="term" value="P:paraxial mesoderm morphogenesis"/>
    <property type="evidence" value="ECO:0000315"/>
    <property type="project" value="MGI"/>
</dbReference>
<dbReference type="GO" id="GO:0007389">
    <property type="term" value="P:pattern specification process"/>
    <property type="evidence" value="ECO:0000316"/>
    <property type="project" value="MGI"/>
</dbReference>
<dbReference type="GO" id="GO:0060039">
    <property type="term" value="P:pericardium development"/>
    <property type="evidence" value="ECO:0000316"/>
    <property type="project" value="MGI"/>
</dbReference>
<dbReference type="GO" id="GO:0030513">
    <property type="term" value="P:positive regulation of BMP signaling pathway"/>
    <property type="evidence" value="ECO:0007669"/>
    <property type="project" value="Ensembl"/>
</dbReference>
<dbReference type="GO" id="GO:0045893">
    <property type="term" value="P:positive regulation of DNA-templated transcription"/>
    <property type="evidence" value="ECO:0000314"/>
    <property type="project" value="MGI"/>
</dbReference>
<dbReference type="GO" id="GO:0010718">
    <property type="term" value="P:positive regulation of epithelial to mesenchymal transition"/>
    <property type="evidence" value="ECO:0000315"/>
    <property type="project" value="BHF-UCL"/>
</dbReference>
<dbReference type="GO" id="GO:0010628">
    <property type="term" value="P:positive regulation of gene expression"/>
    <property type="evidence" value="ECO:0000315"/>
    <property type="project" value="MGI"/>
</dbReference>
<dbReference type="GO" id="GO:0045944">
    <property type="term" value="P:positive regulation of transcription by RNA polymerase II"/>
    <property type="evidence" value="ECO:0000314"/>
    <property type="project" value="MGI"/>
</dbReference>
<dbReference type="GO" id="GO:0009791">
    <property type="term" value="P:post-embryonic development"/>
    <property type="evidence" value="ECO:0000316"/>
    <property type="project" value="MGI"/>
</dbReference>
<dbReference type="GO" id="GO:0003184">
    <property type="term" value="P:pulmonary valve morphogenesis"/>
    <property type="evidence" value="ECO:0000316"/>
    <property type="project" value="BHF-UCL"/>
</dbReference>
<dbReference type="GO" id="GO:0006355">
    <property type="term" value="P:regulation of DNA-templated transcription"/>
    <property type="evidence" value="ECO:0000303"/>
    <property type="project" value="ComplexPortal"/>
</dbReference>
<dbReference type="GO" id="GO:0017015">
    <property type="term" value="P:regulation of transforming growth factor beta receptor signaling pathway"/>
    <property type="evidence" value="ECO:0007669"/>
    <property type="project" value="Ensembl"/>
</dbReference>
<dbReference type="GO" id="GO:0070723">
    <property type="term" value="P:response to cholesterol"/>
    <property type="evidence" value="ECO:0007669"/>
    <property type="project" value="Ensembl"/>
</dbReference>
<dbReference type="GO" id="GO:0009749">
    <property type="term" value="P:response to glucose"/>
    <property type="evidence" value="ECO:0000316"/>
    <property type="project" value="MGI"/>
</dbReference>
<dbReference type="GO" id="GO:0071559">
    <property type="term" value="P:response to transforming growth factor beta"/>
    <property type="evidence" value="ECO:0000316"/>
    <property type="project" value="MGI"/>
</dbReference>
<dbReference type="GO" id="GO:0062009">
    <property type="term" value="P:secondary palate development"/>
    <property type="evidence" value="ECO:0000315"/>
    <property type="project" value="BHF-UCL"/>
</dbReference>
<dbReference type="GO" id="GO:0060395">
    <property type="term" value="P:SMAD protein signal transduction"/>
    <property type="evidence" value="ECO:0000316"/>
    <property type="project" value="MGI"/>
</dbReference>
<dbReference type="GO" id="GO:0007179">
    <property type="term" value="P:transforming growth factor beta receptor signaling pathway"/>
    <property type="evidence" value="ECO:0000314"/>
    <property type="project" value="MGI"/>
</dbReference>
<dbReference type="GO" id="GO:0061450">
    <property type="term" value="P:trophoblast cell migration"/>
    <property type="evidence" value="ECO:0007669"/>
    <property type="project" value="Ensembl"/>
</dbReference>
<dbReference type="GO" id="GO:0001657">
    <property type="term" value="P:ureteric bud development"/>
    <property type="evidence" value="ECO:0000270"/>
    <property type="project" value="UniProtKB"/>
</dbReference>
<dbReference type="GO" id="GO:0007352">
    <property type="term" value="P:zygotic specification of dorsal/ventral axis"/>
    <property type="evidence" value="ECO:0007669"/>
    <property type="project" value="Ensembl"/>
</dbReference>
<dbReference type="CDD" id="cd10491">
    <property type="entry name" value="MH1_SMAD_2_3"/>
    <property type="match status" value="1"/>
</dbReference>
<dbReference type="CDD" id="cd10985">
    <property type="entry name" value="MH2_SMAD_2_3"/>
    <property type="match status" value="1"/>
</dbReference>
<dbReference type="FunFam" id="2.60.200.10:FF:000001">
    <property type="entry name" value="Mothers against decapentaplegic homolog"/>
    <property type="match status" value="1"/>
</dbReference>
<dbReference type="FunFam" id="3.90.520.10:FF:000007">
    <property type="entry name" value="Mothers against decapentaplegic homolog"/>
    <property type="match status" value="1"/>
</dbReference>
<dbReference type="Gene3D" id="2.60.200.10">
    <property type="match status" value="1"/>
</dbReference>
<dbReference type="Gene3D" id="3.90.520.10">
    <property type="entry name" value="SMAD MH1 domain"/>
    <property type="match status" value="1"/>
</dbReference>
<dbReference type="InterPro" id="IPR013790">
    <property type="entry name" value="Dwarfin"/>
</dbReference>
<dbReference type="InterPro" id="IPR003619">
    <property type="entry name" value="MAD_homology1_Dwarfin-type"/>
</dbReference>
<dbReference type="InterPro" id="IPR013019">
    <property type="entry name" value="MAD_homology_MH1"/>
</dbReference>
<dbReference type="InterPro" id="IPR017855">
    <property type="entry name" value="SMAD-like_dom_sf"/>
</dbReference>
<dbReference type="InterPro" id="IPR001132">
    <property type="entry name" value="SMAD_dom_Dwarfin-type"/>
</dbReference>
<dbReference type="InterPro" id="IPR008984">
    <property type="entry name" value="SMAD_FHA_dom_sf"/>
</dbReference>
<dbReference type="InterPro" id="IPR036578">
    <property type="entry name" value="SMAD_MH1_sf"/>
</dbReference>
<dbReference type="PANTHER" id="PTHR13703:SF42">
    <property type="entry name" value="MOTHERS AGAINST DECAPENTAPLEGIC HOMOLOG 2"/>
    <property type="match status" value="1"/>
</dbReference>
<dbReference type="PANTHER" id="PTHR13703">
    <property type="entry name" value="SMAD"/>
    <property type="match status" value="1"/>
</dbReference>
<dbReference type="Pfam" id="PF03165">
    <property type="entry name" value="MH1"/>
    <property type="match status" value="1"/>
</dbReference>
<dbReference type="Pfam" id="PF03166">
    <property type="entry name" value="MH2"/>
    <property type="match status" value="1"/>
</dbReference>
<dbReference type="SMART" id="SM00523">
    <property type="entry name" value="DWA"/>
    <property type="match status" value="1"/>
</dbReference>
<dbReference type="SMART" id="SM00524">
    <property type="entry name" value="DWB"/>
    <property type="match status" value="1"/>
</dbReference>
<dbReference type="SUPFAM" id="SSF56366">
    <property type="entry name" value="SMAD MH1 domain"/>
    <property type="match status" value="1"/>
</dbReference>
<dbReference type="SUPFAM" id="SSF49879">
    <property type="entry name" value="SMAD/FHA domain"/>
    <property type="match status" value="1"/>
</dbReference>
<dbReference type="PROSITE" id="PS51075">
    <property type="entry name" value="MH1"/>
    <property type="match status" value="1"/>
</dbReference>
<dbReference type="PROSITE" id="PS51076">
    <property type="entry name" value="MH2"/>
    <property type="match status" value="1"/>
</dbReference>
<protein>
    <recommendedName>
        <fullName>Mothers against decapentaplegic homolog 2</fullName>
        <shortName>MAD homolog 2</shortName>
        <shortName>Mothers against DPP homolog 2</shortName>
    </recommendedName>
    <alternativeName>
        <fullName>Mad-related protein 2</fullName>
        <shortName>mMad2</shortName>
    </alternativeName>
    <alternativeName>
        <fullName>SMAD family member 2</fullName>
        <shortName>SMAD 2</shortName>
        <shortName>Smad2</shortName>
    </alternativeName>
</protein>
<organism>
    <name type="scientific">Mus musculus</name>
    <name type="common">Mouse</name>
    <dbReference type="NCBI Taxonomy" id="10090"/>
    <lineage>
        <taxon>Eukaryota</taxon>
        <taxon>Metazoa</taxon>
        <taxon>Chordata</taxon>
        <taxon>Craniata</taxon>
        <taxon>Vertebrata</taxon>
        <taxon>Euteleostomi</taxon>
        <taxon>Mammalia</taxon>
        <taxon>Eutheria</taxon>
        <taxon>Euarchontoglires</taxon>
        <taxon>Glires</taxon>
        <taxon>Rodentia</taxon>
        <taxon>Myomorpha</taxon>
        <taxon>Muroidea</taxon>
        <taxon>Muridae</taxon>
        <taxon>Murinae</taxon>
        <taxon>Mus</taxon>
        <taxon>Mus</taxon>
    </lineage>
</organism>
<sequence length="467" mass="52266">MSSILPFTPPVVKRLLGWKKSAGGSGGAGGGEQNGQEEKWCEKAVKSLVKKLKKTGRLDELEKAITTQNCNTKCVTIPSTCSEIWGLSTANTVDQWDTTGLYSFSEQTRSLDGRLQVSHRKGLPHVIYCRLWRWPDLHSHHELKAIENCEYAFNLKKDEVCVNPYHYQRVETPVLPPVLVPRHTEILTELPPLDDYTHSIPENTNFPAGIEPQSNYIPETPPPGYISEDGETSDQQLNQSMDTGSPAELSPTTLSPVNHSLDLQPVTYSEPAFWCSIAYYELNQRVGETFHASQPSLTVDGFTDPSNSERFCLGLLSNVNRNATVEMTRRHIGRGVRLYYIGGEVFAECLSDSAIFVQSPNCNQRYGWHPATVCKIPPGCNLKIFNNQEFAALLAQSVNQGFEAVYQLTRMCTIRMSFVKGWGAEYRRQTVTSTPCWIELHLNGPLQWLDKVLTQMGSPSVRCSSMS</sequence>
<evidence type="ECO:0000250" key="1"/>
<evidence type="ECO:0000250" key="2">
    <source>
        <dbReference type="UniProtKB" id="Q15796"/>
    </source>
</evidence>
<evidence type="ECO:0000255" key="3">
    <source>
        <dbReference type="PROSITE-ProRule" id="PRU00438"/>
    </source>
</evidence>
<evidence type="ECO:0000255" key="4">
    <source>
        <dbReference type="PROSITE-ProRule" id="PRU00439"/>
    </source>
</evidence>
<evidence type="ECO:0000256" key="5">
    <source>
        <dbReference type="SAM" id="MobiDB-lite"/>
    </source>
</evidence>
<evidence type="ECO:0000269" key="6">
    <source>
    </source>
</evidence>
<evidence type="ECO:0000269" key="7">
    <source>
    </source>
</evidence>
<evidence type="ECO:0000269" key="8">
    <source>
    </source>
</evidence>
<evidence type="ECO:0000269" key="9">
    <source>
    </source>
</evidence>
<evidence type="ECO:0000269" key="10">
    <source>
    </source>
</evidence>
<evidence type="ECO:0000269" key="11">
    <source>
    </source>
</evidence>
<evidence type="ECO:0000269" key="12">
    <source>
    </source>
</evidence>
<evidence type="ECO:0000269" key="13">
    <source>
    </source>
</evidence>
<evidence type="ECO:0000269" key="14">
    <source>
    </source>
</evidence>
<evidence type="ECO:0000269" key="15">
    <source>
    </source>
</evidence>
<evidence type="ECO:0000269" key="16">
    <source>
    </source>
</evidence>
<evidence type="ECO:0000303" key="17">
    <source>
    </source>
</evidence>
<evidence type="ECO:0000305" key="18"/>
<comment type="function">
    <text evidence="2 11 16">Receptor-regulated SMAD (R-SMAD) that is an intracellular signal transducer and transcriptional modulator activated by TGF-beta (transforming growth factor) and activin type 1 receptor kinases. Binds the TRE element in the promoter region of many genes that are regulated by TGF-beta and, on formation of the SMAD2/SMAD4 complex, activates transcription. Promotes TGFB1-mediated transcription of odontoblastic differentiation genes in dental papilla cells (PubMed:33548622). Positively regulates PDPK1 kinase activity by stimulating its dissociation from the 14-3-3 protein YWHAQ which acts as a negative regulator (By similarity).</text>
</comment>
<comment type="subunit">
    <text evidence="2 6 7 8 10 11 12 13 14 15 16">Monomer; in the absence of TGF-beta (By similarity). Heterodimer; in the presence of TGF-beta (By similarity). Forms a heterodimer with co-SMAD, SMAD4, in the nucleus to form the transactivation complex SMAD2/SMAD4 (PubMed:21145499). Found in a complex with SMAD3 and TRIM33 upon addition of TGF-beta (By similarity). Identified in a complex that contains at least ZNF451, SMAD2, SMAD3 and SMAD4 (By similarity). Interacts (via the MH2 domain) with ZFYVE9; may form trimers with the SMAD4 co-SMAD (PubMed:15356634). Interacts with TAZ/WWRT1 (By similarity). Interacts with FOXH1 (By similarity). Interacts with SNW1 (By similarity). Interacts with CREB-binding protein (CBP) and EP300 (By similarity). Interacts with SNON (By similarity). Interacts with ALK4/ACVR1B (By similarity). Interacts with SKOR1 (By similarity). Interacts with SKOR2 (By similarity). Interacts with PRDM16 (By similarity). Interacts (via MH2 domain) with LEMD3 (By similarity). Interacts with RBPMS (By similarity). Interacts with WWP1. Interacts (dephosphorylated form, via the MH1 and MH2 domains) with RANBP3 (via its C-terminal R domain); the interaction results in the export of dephosphorylated SMAD3 out of the nucleus and termination of the TGF-beta signaling (By similarity). Interacts with PDPK1 (via PH domain) (By similarity). Interacts with DAB2; the interactions are enhanced upon TGF-beta stimulation (By similarity). Interacts with USP15 (By similarity). Interacts with PPP5C (PubMed:22781750). Interacts with LDLRAD4 (via the SMAD interaction motif) (By similarity). Interacts (via MH2 domain) with PMEPA1 (via the SMAD interaction motif) (By similarity). Interacts with ZFHX3 (By similarity). Interacts with ZNF451 (By similarity). Interacts with SMURF2 when phosphorylated on Ser-465/467 (By similarity). Interacts with PPM1A (By similarity). Interacts with TGF-beta (By similarity). Interacts with TGFBR1 (By similarity). Interacts with TGIF (By similarity). Interacts with SMAD3 and TRIM33 (By similarity). Interacts with ZNF580 (By similarity). Interacts with NEDD4L in response to TGF-beta (PubMed:15496141). Interacts with HGS (PubMed:11094085). Interacts with AIP1 (PubMed:10681527). Interacts with WWP1 (PubMed:15221015). Interacts with PML (PubMed:15356634). Interacts weakly with ZNF8 (PubMed:12370310). Interacts (when phosphorylated) with RNF111; RNF111 acts as an enhancer of the transcriptional responses by mediating ubiquitination and degradation of SMAD2 inhibitors (PubMed:17341133). Interacts with YAP1 (when phosphorylated at 'Ser-112') (PubMed:21145499). Interacts when phosphorylated with IPO7; the interaction facilitates translocation of SMAD2 to the nucleus (PubMed:33548622). Interacts with MTMR4; negatively regulates TGF-beta signaling through SMAD2 dephosphorylation and retention in endosomes (By similarity).</text>
</comment>
<comment type="subcellular location">
    <subcellularLocation>
        <location evidence="14 16">Cytoplasm</location>
    </subcellularLocation>
    <subcellularLocation>
        <location evidence="14 16">Nucleus</location>
    </subcellularLocation>
    <text evidence="2 14 16">Cytoplasmic and nuclear in the absence of TGF-beta. On TGF-beta stimulation, migrates to the nucleus when complexed with SMAD4 or with IPO7 (PubMed:21145499, PubMed:33548622). On dephosphorylation by phosphatase PPM1A, released from the SMAD2/SMAD4 complex, and exported out of the nucleus by interaction with RANBP1 (By similarity). Localized mainly to the nucleus in the early stages of embryo development with expression becoming evident in the cytoplasm at the blastocyst and epiblast stages (PubMed:21145499).</text>
</comment>
<comment type="alternative products">
    <event type="alternative splicing"/>
    <isoform>
        <id>Q62432-1</id>
        <name>Long</name>
        <sequence type="displayed"/>
    </isoform>
    <isoform>
        <id>Q62432-2</id>
        <name>Short</name>
        <name>Deltaexon3</name>
        <sequence type="described" ref="VSP_021571"/>
    </isoform>
    <text>mRNA corresponding to the isoform Long is approximately 20-fold more abundant. Both forms are coexpressed throughout mouse development.</text>
</comment>
<comment type="PTM">
    <text evidence="9 11 13">In response to TGF-beta, phosphorylated on the C-terminal SXS motif by TGF-beta and activin type 1 receptor kinases, phosphorylation declines progressively in a KMT5A-dependent manner. Phosphorylation in this motif is required for interaction with a number of proteins including SMURF2, SNON and SMAD4 in response to TGF-beta. Dephosphorylated in this motif by PPM1A leading to disruption of the SMAD2/3-SMAD4 complex, nuclear export and termination of the TGF-beta signaling. In response to decorin, the naturally occurring inhibitor of TGF-beta signaling, phosphorylated on Ser-240 by CaMK2. Phosphorylated by MAPK3 upon EGF stimulation; which increases transcriptional activity and stability, and is blocked by calmodulin. Phosphorylated by PDPK1.</text>
</comment>
<comment type="PTM">
    <text evidence="2 12 13">In response to TGF-beta, ubiquitinated by NEDD4L; which promotes its degradation. Monoubiquitinated, leading to prevent DNA-binding (PubMed:15496141). Deubiquitination by USP15 alleviates inhibition and promotes activation of TGF-beta target genes (By similarity). Ubiquitinated by RNF111, leading to its degradation: only SMAD2 proteins that are 'in use' are targeted by RNF111, RNF111 playing a key role in activating SMAD2 and regulating its turnover (PubMed:17341133).</text>
</comment>
<comment type="PTM">
    <text evidence="2">Acetylated on Lys-19 by coactivators in response to TGF-beta signaling, which increases transcriptional activity.</text>
</comment>
<comment type="similarity">
    <text evidence="18">Belongs to the dwarfin/SMAD family.</text>
</comment>
<name>SMAD2_MOUSE</name>
<feature type="initiator methionine" description="Removed" evidence="2">
    <location>
        <position position="1"/>
    </location>
</feature>
<feature type="chain" id="PRO_0000090853" description="Mothers against decapentaplegic homolog 2">
    <location>
        <begin position="2"/>
        <end position="467"/>
    </location>
</feature>
<feature type="domain" description="MH1" evidence="3">
    <location>
        <begin position="10"/>
        <end position="176"/>
    </location>
</feature>
<feature type="domain" description="MH2" evidence="4">
    <location>
        <begin position="274"/>
        <end position="467"/>
    </location>
</feature>
<feature type="region of interest" description="Disordered" evidence="5">
    <location>
        <begin position="207"/>
        <end position="251"/>
    </location>
</feature>
<feature type="short sequence motif" description="PY-motif" evidence="1">
    <location>
        <begin position="221"/>
        <end position="225"/>
    </location>
</feature>
<feature type="compositionally biased region" description="Polar residues" evidence="5">
    <location>
        <begin position="207"/>
        <end position="217"/>
    </location>
</feature>
<feature type="compositionally biased region" description="Polar residues" evidence="5">
    <location>
        <begin position="233"/>
        <end position="243"/>
    </location>
</feature>
<feature type="binding site" evidence="1">
    <location>
        <position position="74"/>
    </location>
    <ligand>
        <name>Zn(2+)</name>
        <dbReference type="ChEBI" id="CHEBI:29105"/>
    </ligand>
</feature>
<feature type="binding site" evidence="1">
    <location>
        <position position="149"/>
    </location>
    <ligand>
        <name>Zn(2+)</name>
        <dbReference type="ChEBI" id="CHEBI:29105"/>
    </ligand>
</feature>
<feature type="binding site" evidence="1">
    <location>
        <position position="161"/>
    </location>
    <ligand>
        <name>Zn(2+)</name>
        <dbReference type="ChEBI" id="CHEBI:29105"/>
    </ligand>
</feature>
<feature type="binding site" evidence="1">
    <location>
        <position position="166"/>
    </location>
    <ligand>
        <name>Zn(2+)</name>
        <dbReference type="ChEBI" id="CHEBI:29105"/>
    </ligand>
</feature>
<feature type="modified residue" description="N-acetylserine" evidence="2">
    <location>
        <position position="2"/>
    </location>
</feature>
<feature type="modified residue" description="Phosphothreonine" evidence="2">
    <location>
        <position position="8"/>
    </location>
</feature>
<feature type="modified residue" description="N6-acetyllysine" evidence="2">
    <location>
        <position position="19"/>
    </location>
</feature>
<feature type="modified residue" description="Phosphothreonine" evidence="2">
    <location>
        <position position="220"/>
    </location>
</feature>
<feature type="modified residue" description="Phosphoserine; by CAMK2" evidence="2 4">
    <location>
        <position position="240"/>
    </location>
</feature>
<feature type="modified residue" description="Phosphoserine" evidence="2">
    <location>
        <position position="245"/>
    </location>
</feature>
<feature type="modified residue" description="Phosphoserine" evidence="2">
    <location>
        <position position="250"/>
    </location>
</feature>
<feature type="modified residue" description="Phosphoserine" evidence="2">
    <location>
        <position position="255"/>
    </location>
</feature>
<feature type="modified residue" description="Phosphoserine" evidence="2 4">
    <location>
        <position position="458"/>
    </location>
</feature>
<feature type="modified residue" description="Phosphoserine" evidence="2 4">
    <location>
        <position position="460"/>
    </location>
</feature>
<feature type="modified residue" description="Phosphoserine" evidence="2 4">
    <location>
        <position position="464"/>
    </location>
</feature>
<feature type="modified residue" description="Phosphoserine; by TGFBR1" evidence="2 4">
    <location>
        <position position="465"/>
    </location>
</feature>
<feature type="modified residue" description="Phosphoserine; by TGFBR1" evidence="2 4">
    <location>
        <position position="467"/>
    </location>
</feature>
<feature type="splice variant" id="VSP_021571" description="In isoform Short." evidence="17">
    <location>
        <begin position="79"/>
        <end position="108"/>
    </location>
</feature>
<feature type="sequence conflict" description="In Ref. 1; AAB03612 and 2; AAB62269." evidence="18" ref="1 2">
    <original>E</original>
    <variation>Q</variation>
    <location>
        <position position="42"/>
    </location>
</feature>
<keyword id="KW-0007">Acetylation</keyword>
<keyword id="KW-0025">Alternative splicing</keyword>
<keyword id="KW-0963">Cytoplasm</keyword>
<keyword id="KW-0238">DNA-binding</keyword>
<keyword id="KW-0479">Metal-binding</keyword>
<keyword id="KW-0539">Nucleus</keyword>
<keyword id="KW-0597">Phosphoprotein</keyword>
<keyword id="KW-1185">Reference proteome</keyword>
<keyword id="KW-0804">Transcription</keyword>
<keyword id="KW-0805">Transcription regulation</keyword>
<keyword id="KW-0832">Ubl conjugation</keyword>
<keyword id="KW-0862">Zinc</keyword>
<accession>Q62432</accession>
<accession>Q6GU18</accession>
<accession>Q6VP00</accession>
<accession>Q9D8P6</accession>
<gene>
    <name type="primary">Smad2</name>
    <name type="synonym">Madh2</name>
    <name type="synonym">Madr2</name>
</gene>
<proteinExistence type="evidence at protein level"/>
<reference key="1">
    <citation type="journal article" date="1996" name="Genes Dev.">
        <title>A novel mesoderm inducer, Madr2, functions in the activin signal transduction pathway.</title>
        <authorList>
            <person name="Baker J.C."/>
            <person name="Harland R.M."/>
        </authorList>
    </citation>
    <scope>NUCLEOTIDE SEQUENCE [MRNA] (ISOFORM LONG)</scope>
    <source>
        <strain>129/Sv</strain>
    </source>
</reference>
<reference key="2">
    <citation type="journal article" date="1997" name="Carcinogenesis">
        <title>Smad4 (homolog of human DPC4) and Smad2 (homolog of human JV18-1): candidates for murine lung tumor resistance and suppressor genes.</title>
        <authorList>
            <person name="Devereux T.R."/>
            <person name="Anna C.H."/>
            <person name="Patel A.C."/>
            <person name="White C.M."/>
            <person name="Festing M.F."/>
            <person name="You M."/>
        </authorList>
    </citation>
    <scope>NUCLEOTIDE SEQUENCE [MRNA] (ISOFORM LONG)</scope>
    <source>
        <strain>A/J</strain>
        <strain>BALB/cJ</strain>
    </source>
</reference>
<reference key="3">
    <citation type="journal article" date="2004" name="Mol. Endocrinol.">
        <title>Both SMAD2 and SMAD3 mediate activin-stimulated expression of the follicle-stimulating hormone beta subunit in mouse gonadotrope cells.</title>
        <authorList>
            <person name="Bernard D.J."/>
        </authorList>
    </citation>
    <scope>NUCLEOTIDE SEQUENCE [MRNA] (ISOFORMS LONG AND SHORT)</scope>
</reference>
<reference key="4">
    <citation type="journal article" date="2005" name="Science">
        <title>The transcriptional landscape of the mammalian genome.</title>
        <authorList>
            <person name="Carninci P."/>
            <person name="Kasukawa T."/>
            <person name="Katayama S."/>
            <person name="Gough J."/>
            <person name="Frith M.C."/>
            <person name="Maeda N."/>
            <person name="Oyama R."/>
            <person name="Ravasi T."/>
            <person name="Lenhard B."/>
            <person name="Wells C."/>
            <person name="Kodzius R."/>
            <person name="Shimokawa K."/>
            <person name="Bajic V.B."/>
            <person name="Brenner S.E."/>
            <person name="Batalov S."/>
            <person name="Forrest A.R."/>
            <person name="Zavolan M."/>
            <person name="Davis M.J."/>
            <person name="Wilming L.G."/>
            <person name="Aidinis V."/>
            <person name="Allen J.E."/>
            <person name="Ambesi-Impiombato A."/>
            <person name="Apweiler R."/>
            <person name="Aturaliya R.N."/>
            <person name="Bailey T.L."/>
            <person name="Bansal M."/>
            <person name="Baxter L."/>
            <person name="Beisel K.W."/>
            <person name="Bersano T."/>
            <person name="Bono H."/>
            <person name="Chalk A.M."/>
            <person name="Chiu K.P."/>
            <person name="Choudhary V."/>
            <person name="Christoffels A."/>
            <person name="Clutterbuck D.R."/>
            <person name="Crowe M.L."/>
            <person name="Dalla E."/>
            <person name="Dalrymple B.P."/>
            <person name="de Bono B."/>
            <person name="Della Gatta G."/>
            <person name="di Bernardo D."/>
            <person name="Down T."/>
            <person name="Engstrom P."/>
            <person name="Fagiolini M."/>
            <person name="Faulkner G."/>
            <person name="Fletcher C.F."/>
            <person name="Fukushima T."/>
            <person name="Furuno M."/>
            <person name="Futaki S."/>
            <person name="Gariboldi M."/>
            <person name="Georgii-Hemming P."/>
            <person name="Gingeras T.R."/>
            <person name="Gojobori T."/>
            <person name="Green R.E."/>
            <person name="Gustincich S."/>
            <person name="Harbers M."/>
            <person name="Hayashi Y."/>
            <person name="Hensch T.K."/>
            <person name="Hirokawa N."/>
            <person name="Hill D."/>
            <person name="Huminiecki L."/>
            <person name="Iacono M."/>
            <person name="Ikeo K."/>
            <person name="Iwama A."/>
            <person name="Ishikawa T."/>
            <person name="Jakt M."/>
            <person name="Kanapin A."/>
            <person name="Katoh M."/>
            <person name="Kawasawa Y."/>
            <person name="Kelso J."/>
            <person name="Kitamura H."/>
            <person name="Kitano H."/>
            <person name="Kollias G."/>
            <person name="Krishnan S.P."/>
            <person name="Kruger A."/>
            <person name="Kummerfeld S.K."/>
            <person name="Kurochkin I.V."/>
            <person name="Lareau L.F."/>
            <person name="Lazarevic D."/>
            <person name="Lipovich L."/>
            <person name="Liu J."/>
            <person name="Liuni S."/>
            <person name="McWilliam S."/>
            <person name="Madan Babu M."/>
            <person name="Madera M."/>
            <person name="Marchionni L."/>
            <person name="Matsuda H."/>
            <person name="Matsuzawa S."/>
            <person name="Miki H."/>
            <person name="Mignone F."/>
            <person name="Miyake S."/>
            <person name="Morris K."/>
            <person name="Mottagui-Tabar S."/>
            <person name="Mulder N."/>
            <person name="Nakano N."/>
            <person name="Nakauchi H."/>
            <person name="Ng P."/>
            <person name="Nilsson R."/>
            <person name="Nishiguchi S."/>
            <person name="Nishikawa S."/>
            <person name="Nori F."/>
            <person name="Ohara O."/>
            <person name="Okazaki Y."/>
            <person name="Orlando V."/>
            <person name="Pang K.C."/>
            <person name="Pavan W.J."/>
            <person name="Pavesi G."/>
            <person name="Pesole G."/>
            <person name="Petrovsky N."/>
            <person name="Piazza S."/>
            <person name="Reed J."/>
            <person name="Reid J.F."/>
            <person name="Ring B.Z."/>
            <person name="Ringwald M."/>
            <person name="Rost B."/>
            <person name="Ruan Y."/>
            <person name="Salzberg S.L."/>
            <person name="Sandelin A."/>
            <person name="Schneider C."/>
            <person name="Schoenbach C."/>
            <person name="Sekiguchi K."/>
            <person name="Semple C.A."/>
            <person name="Seno S."/>
            <person name="Sessa L."/>
            <person name="Sheng Y."/>
            <person name="Shibata Y."/>
            <person name="Shimada H."/>
            <person name="Shimada K."/>
            <person name="Silva D."/>
            <person name="Sinclair B."/>
            <person name="Sperling S."/>
            <person name="Stupka E."/>
            <person name="Sugiura K."/>
            <person name="Sultana R."/>
            <person name="Takenaka Y."/>
            <person name="Taki K."/>
            <person name="Tammoja K."/>
            <person name="Tan S.L."/>
            <person name="Tang S."/>
            <person name="Taylor M.S."/>
            <person name="Tegner J."/>
            <person name="Teichmann S.A."/>
            <person name="Ueda H.R."/>
            <person name="van Nimwegen E."/>
            <person name="Verardo R."/>
            <person name="Wei C.L."/>
            <person name="Yagi K."/>
            <person name="Yamanishi H."/>
            <person name="Zabarovsky E."/>
            <person name="Zhu S."/>
            <person name="Zimmer A."/>
            <person name="Hide W."/>
            <person name="Bult C."/>
            <person name="Grimmond S.M."/>
            <person name="Teasdale R.D."/>
            <person name="Liu E.T."/>
            <person name="Brusic V."/>
            <person name="Quackenbush J."/>
            <person name="Wahlestedt C."/>
            <person name="Mattick J.S."/>
            <person name="Hume D.A."/>
            <person name="Kai C."/>
            <person name="Sasaki D."/>
            <person name="Tomaru Y."/>
            <person name="Fukuda S."/>
            <person name="Kanamori-Katayama M."/>
            <person name="Suzuki M."/>
            <person name="Aoki J."/>
            <person name="Arakawa T."/>
            <person name="Iida J."/>
            <person name="Imamura K."/>
            <person name="Itoh M."/>
            <person name="Kato T."/>
            <person name="Kawaji H."/>
            <person name="Kawagashira N."/>
            <person name="Kawashima T."/>
            <person name="Kojima M."/>
            <person name="Kondo S."/>
            <person name="Konno H."/>
            <person name="Nakano K."/>
            <person name="Ninomiya N."/>
            <person name="Nishio T."/>
            <person name="Okada M."/>
            <person name="Plessy C."/>
            <person name="Shibata K."/>
            <person name="Shiraki T."/>
            <person name="Suzuki S."/>
            <person name="Tagami M."/>
            <person name="Waki K."/>
            <person name="Watahiki A."/>
            <person name="Okamura-Oho Y."/>
            <person name="Suzuki H."/>
            <person name="Kawai J."/>
            <person name="Hayashizaki Y."/>
        </authorList>
    </citation>
    <scope>NUCLEOTIDE SEQUENCE [LARGE SCALE MRNA] (ISOFORM LONG)</scope>
    <source>
        <strain>C57BL/6J</strain>
        <tissue>Pancreas</tissue>
    </source>
</reference>
<reference key="5">
    <citation type="journal article" date="2004" name="Genome Res.">
        <title>The status, quality, and expansion of the NIH full-length cDNA project: the Mammalian Gene Collection (MGC).</title>
        <authorList>
            <consortium name="The MGC Project Team"/>
        </authorList>
    </citation>
    <scope>NUCLEOTIDE SEQUENCE [LARGE SCALE MRNA] (ISOFORM LONG)</scope>
</reference>
<reference key="6">
    <citation type="journal article" date="2000" name="Cytokine Growth Factor Rev.">
        <title>Functions of mammalian Smad genes as revealed by targeted gene disruption in mice.</title>
        <authorList>
            <person name="Weinstein M."/>
            <person name="Yang X."/>
            <person name="Deng C.-X."/>
        </authorList>
    </citation>
    <scope>REVIEW</scope>
</reference>
<reference key="7">
    <citation type="journal article" date="2002" name="Mol. Cell. Biol.">
        <title>Identification of mZnf8, a mouse Kruppel-like transcriptional repressor, as a novel nuclear interaction partner of Smad1.</title>
        <authorList>
            <person name="Jiao K."/>
            <person name="Zhou Y."/>
            <person name="Hogan B.L.M."/>
        </authorList>
    </citation>
    <scope>INTERACTION WITH ZNF8</scope>
</reference>
<reference key="8">
    <citation type="journal article" date="2004" name="Nature">
        <title>Cytoplasmic PML function in TGF-beta signalling.</title>
        <authorList>
            <person name="Lin H.K."/>
            <person name="Bergmann S."/>
            <person name="Pandolfi P.P."/>
        </authorList>
    </citation>
    <scope>FUNCTION</scope>
    <scope>PHOSPHORYLATION</scope>
    <scope>INTERACTION WITH PML AND ZFYVE9/SARA</scope>
</reference>
<reference key="9">
    <citation type="journal article" date="2004" name="Oncogene">
        <title>Negative regulation of transforming growth factor-beta (TGF-beta) signaling by WW domain-containing protein 1 (WWP1).</title>
        <authorList>
            <person name="Komuro A."/>
            <person name="Imamura T."/>
            <person name="Saitoh M."/>
            <person name="Yoshida Y."/>
            <person name="Yamori T."/>
            <person name="Miyazono K."/>
            <person name="Miyazawa K."/>
        </authorList>
    </citation>
    <scope>INTERACTION WITH WWP1</scope>
</reference>
<reference key="10">
    <citation type="journal article" date="2005" name="Genes Dev.">
        <title>Mice exclusively expressing the short isoform of Smad2 develop normally and are viable and fertile.</title>
        <authorList>
            <person name="Dunn N.R."/>
            <person name="Koonce C.H."/>
            <person name="Anderson D.C."/>
            <person name="Islam A."/>
            <person name="Bikoff E.K."/>
            <person name="Robertson E.J."/>
        </authorList>
    </citation>
    <scope>ALTERNATIVE SPLICING (ISOFORM SHORT)</scope>
</reference>
<reference key="11">
    <citation type="journal article" date="2003" name="J. Biol. Chem.">
        <title>Transforming growth factor-beta 1 inhibits non-pathogenic Gram negative bacteria-induced NF-kappa B recruitment to the interleukin-6 gene promoter in intestinal epithelial cells through modulation of histone acetylation.</title>
        <authorList>
            <person name="Haller D."/>
            <person name="Holt L."/>
            <person name="Kim S.C."/>
            <person name="Schwabe R.F."/>
            <person name="Sartor R.B."/>
            <person name="Jobin C."/>
        </authorList>
    </citation>
    <scope>PHOSPHORYLATION AT SER-465 AND SER-467</scope>
</reference>
<reference key="12">
    <citation type="journal article" date="2000" name="J. Biol. Chem.">
        <title>Identification and characterization of a PDZ protein that interacts with activin types II receptors.</title>
        <authorList>
            <person name="Shoji H."/>
            <person name="Tsuchida K."/>
            <person name="Kishi H."/>
            <person name="Yamakawa N."/>
            <person name="Matsuzaki T."/>
            <person name="Liu Z."/>
            <person name="Nakamura T."/>
            <person name="Sugino H."/>
        </authorList>
    </citation>
    <scope>INTERACTION WITH AIP1</scope>
</reference>
<reference key="13">
    <citation type="journal article" date="2000" name="Mol. Cell. Biol.">
        <title>Hgs (Hrs), a FYVE domain protein, is involved in Smad signaling through cooperation with SARA.</title>
        <authorList>
            <person name="Miura S."/>
            <person name="Takeshita T."/>
            <person name="Asao H."/>
            <person name="Kimura Y."/>
            <person name="Murata K."/>
            <person name="Sasaki Y."/>
            <person name="Hanai J."/>
            <person name="Beppu H."/>
            <person name="Tsukazaki T."/>
            <person name="Wrana J.L."/>
            <person name="Miyazono K."/>
            <person name="Sugamura K."/>
        </authorList>
    </citation>
    <scope>INTERACTION WITH HGS</scope>
</reference>
<reference key="14">
    <citation type="journal article" date="2005" name="Biochem. J.">
        <title>NEDD4-2 (neural precursor cell expressed, developmentally down-regulated 4-2) negatively regulates TGF-beta (transforming growth factor-beta) signalling by inducing ubiquitin-mediated degradation of Smad2 and TGF-beta type I receptor.</title>
        <authorList>
            <person name="Kuratomi G."/>
            <person name="Komuro A."/>
            <person name="Goto K."/>
            <person name="Shinozaki M."/>
            <person name="Miyazawa K."/>
            <person name="Miyazono K."/>
            <person name="Imamura T."/>
        </authorList>
    </citation>
    <scope>INTERACTION WITH NEDD4L</scope>
    <scope>UBIQUITINATION</scope>
</reference>
<reference key="15">
    <citation type="journal article" date="2007" name="PLoS Biol.">
        <title>Arkadia enhances Nodal/TGF-beta signaling by coupling phospho-Smad2/3 activity and turnover.</title>
        <authorList>
            <person name="Mavrakis K.J."/>
            <person name="Andrew R.L."/>
            <person name="Lee K.L."/>
            <person name="Petropoulou C."/>
            <person name="Dixon J.E."/>
            <person name="Navaratnam N."/>
            <person name="Norris D.P."/>
            <person name="Episkopou V."/>
        </authorList>
    </citation>
    <scope>INTERACTION WITH RNF111</scope>
    <scope>PHOSPHORYLATION</scope>
    <scope>UBIQUITINATION</scope>
</reference>
<reference key="16">
    <citation type="journal article" date="2010" name="Dev. Cell">
        <title>The Crumbs complex couples cell density sensing to Hippo-dependent control of the TGF-beta-SMAD pathway.</title>
        <authorList>
            <person name="Varelas X."/>
            <person name="Samavarchi-Tehrani P."/>
            <person name="Narimatsu M."/>
            <person name="Weiss A."/>
            <person name="Cockburn K."/>
            <person name="Larsen B.G."/>
            <person name="Rossant J."/>
            <person name="Wrana J.L."/>
        </authorList>
    </citation>
    <scope>INTERACTION WITH YAP1 AND SMAD4</scope>
    <scope>SUBCELLULAR LOCATION</scope>
</reference>
<reference key="17">
    <citation type="journal article" date="2010" name="Cell">
        <title>A tissue-specific atlas of mouse protein phosphorylation and expression.</title>
        <authorList>
            <person name="Huttlin E.L."/>
            <person name="Jedrychowski M.P."/>
            <person name="Elias J.E."/>
            <person name="Goswami T."/>
            <person name="Rad R."/>
            <person name="Beausoleil S.A."/>
            <person name="Villen J."/>
            <person name="Haas W."/>
            <person name="Sowa M.E."/>
            <person name="Gygi S.P."/>
        </authorList>
    </citation>
    <scope>IDENTIFICATION BY MASS SPECTROMETRY [LARGE SCALE ANALYSIS]</scope>
    <source>
        <tissue>Lung</tissue>
        <tissue>Spleen</tissue>
        <tissue>Testis</tissue>
    </source>
</reference>
<reference key="18">
    <citation type="journal article" date="2012" name="Cell. Signal.">
        <title>Protein phosphatase 5 modulates SMAD3 function in the transforming growth factor-beta pathway.</title>
        <authorList>
            <person name="Bruce D.L."/>
            <person name="Macartney T."/>
            <person name="Yong W."/>
            <person name="Shou W."/>
            <person name="Sapkota G.P."/>
        </authorList>
    </citation>
    <scope>INTERACTION WITH PPP5C</scope>
    <scope>SUBCELLULAR LOCATION</scope>
</reference>
<reference key="19">
    <citation type="journal article" date="2021" name="Biochem. Biophys. Res. Commun.">
        <title>Effects of transforming growth factor-beta1 on odontoblastic differentiation in dental papilla cells is determined by IPO7 expression level.</title>
        <authorList>
            <person name="Zhang Y."/>
            <person name="Zhang H."/>
            <person name="Yuan G."/>
            <person name="Yang G."/>
        </authorList>
    </citation>
    <scope>FUNCTION</scope>
    <scope>INTERACTION WITH IPO7</scope>
    <scope>SUBCELLULAR LOCATION</scope>
</reference>